<dbReference type="EMBL" id="AC120159">
    <property type="status" value="NOT_ANNOTATED_CDS"/>
    <property type="molecule type" value="Genomic_DNA"/>
</dbReference>
<dbReference type="EMBL" id="AK083089">
    <property type="protein sequence ID" value="BAC38756.1"/>
    <property type="status" value="ALT_INIT"/>
    <property type="molecule type" value="mRNA"/>
</dbReference>
<dbReference type="EMBL" id="AK161331">
    <property type="protein sequence ID" value="BAE36329.1"/>
    <property type="status" value="ALT_INIT"/>
    <property type="molecule type" value="mRNA"/>
</dbReference>
<dbReference type="CCDS" id="CCDS37954.1"/>
<dbReference type="RefSeq" id="NP_808389.2">
    <property type="nucleotide sequence ID" value="NM_177721.4"/>
</dbReference>
<dbReference type="SMR" id="Q8BIV3"/>
<dbReference type="BioGRID" id="232214">
    <property type="interactions" value="9"/>
</dbReference>
<dbReference type="FunCoup" id="Q8BIV3">
    <property type="interactions" value="3972"/>
</dbReference>
<dbReference type="STRING" id="10090.ENSMUSP00000100503"/>
<dbReference type="iPTMnet" id="Q8BIV3"/>
<dbReference type="PhosphoSitePlus" id="Q8BIV3"/>
<dbReference type="jPOST" id="Q8BIV3"/>
<dbReference type="PaxDb" id="10090-ENSMUSP00000100503"/>
<dbReference type="ProteomicsDB" id="299925"/>
<dbReference type="Pumba" id="Q8BIV3"/>
<dbReference type="Antibodypedia" id="24215">
    <property type="antibodies" value="105 antibodies from 27 providers"/>
</dbReference>
<dbReference type="DNASU" id="240614"/>
<dbReference type="Ensembl" id="ENSMUST00000099525.5">
    <property type="protein sequence ID" value="ENSMUSP00000100503.3"/>
    <property type="gene ID" value="ENSMUSG00000074909.6"/>
</dbReference>
<dbReference type="GeneID" id="240614"/>
<dbReference type="KEGG" id="mmu:240614"/>
<dbReference type="UCSC" id="uc008heb.2">
    <property type="organism name" value="mouse"/>
</dbReference>
<dbReference type="AGR" id="MGI:2683212"/>
<dbReference type="CTD" id="26953"/>
<dbReference type="MGI" id="MGI:2683212">
    <property type="gene designation" value="Ranbp6"/>
</dbReference>
<dbReference type="VEuPathDB" id="HostDB:ENSMUSG00000074909"/>
<dbReference type="eggNOG" id="KOG2171">
    <property type="taxonomic scope" value="Eukaryota"/>
</dbReference>
<dbReference type="GeneTree" id="ENSGT00940000162767"/>
<dbReference type="HOGENOM" id="CLU_003794_0_0_1"/>
<dbReference type="InParanoid" id="Q8BIV3"/>
<dbReference type="OMA" id="NDSCYQD"/>
<dbReference type="OrthoDB" id="543373at2759"/>
<dbReference type="PhylomeDB" id="Q8BIV3"/>
<dbReference type="TreeFam" id="TF300344"/>
<dbReference type="BioGRID-ORCS" id="240614">
    <property type="hits" value="0 hits in 78 CRISPR screens"/>
</dbReference>
<dbReference type="ChiTaRS" id="Ranbp6">
    <property type="organism name" value="mouse"/>
</dbReference>
<dbReference type="PRO" id="PR:Q8BIV3"/>
<dbReference type="Proteomes" id="UP000000589">
    <property type="component" value="Chromosome 19"/>
</dbReference>
<dbReference type="RNAct" id="Q8BIV3">
    <property type="molecule type" value="protein"/>
</dbReference>
<dbReference type="Bgee" id="ENSMUSG00000074909">
    <property type="expression patterns" value="Expressed in medial vestibular nucleus and 221 other cell types or tissues"/>
</dbReference>
<dbReference type="ExpressionAtlas" id="Q8BIV3">
    <property type="expression patterns" value="baseline and differential"/>
</dbReference>
<dbReference type="GO" id="GO:0005737">
    <property type="term" value="C:cytoplasm"/>
    <property type="evidence" value="ECO:0007669"/>
    <property type="project" value="UniProtKB-SubCell"/>
</dbReference>
<dbReference type="GO" id="GO:0005634">
    <property type="term" value="C:nucleus"/>
    <property type="evidence" value="ECO:0007669"/>
    <property type="project" value="UniProtKB-SubCell"/>
</dbReference>
<dbReference type="GO" id="GO:0045202">
    <property type="term" value="C:synapse"/>
    <property type="evidence" value="ECO:0000314"/>
    <property type="project" value="SynGO"/>
</dbReference>
<dbReference type="GO" id="GO:0006606">
    <property type="term" value="P:protein import into nucleus"/>
    <property type="evidence" value="ECO:0007669"/>
    <property type="project" value="InterPro"/>
</dbReference>
<dbReference type="FunFam" id="1.25.10.10:FF:000415">
    <property type="entry name" value="Importin 5"/>
    <property type="match status" value="1"/>
</dbReference>
<dbReference type="Gene3D" id="1.25.10.10">
    <property type="entry name" value="Leucine-rich Repeat Variant"/>
    <property type="match status" value="1"/>
</dbReference>
<dbReference type="InterPro" id="IPR011989">
    <property type="entry name" value="ARM-like"/>
</dbReference>
<dbReference type="InterPro" id="IPR016024">
    <property type="entry name" value="ARM-type_fold"/>
</dbReference>
<dbReference type="InterPro" id="IPR000357">
    <property type="entry name" value="HEAT"/>
</dbReference>
<dbReference type="InterPro" id="IPR040122">
    <property type="entry name" value="Importin_beta"/>
</dbReference>
<dbReference type="InterPro" id="IPR041653">
    <property type="entry name" value="Importin_rep_4"/>
</dbReference>
<dbReference type="InterPro" id="IPR041389">
    <property type="entry name" value="Importin_rep_6"/>
</dbReference>
<dbReference type="PANTHER" id="PTHR10527">
    <property type="entry name" value="IMPORTIN BETA"/>
    <property type="match status" value="1"/>
</dbReference>
<dbReference type="Pfam" id="PF02985">
    <property type="entry name" value="HEAT"/>
    <property type="match status" value="1"/>
</dbReference>
<dbReference type="Pfam" id="PF13513">
    <property type="entry name" value="HEAT_EZ"/>
    <property type="match status" value="1"/>
</dbReference>
<dbReference type="Pfam" id="PF18808">
    <property type="entry name" value="Importin_rep_4"/>
    <property type="match status" value="1"/>
</dbReference>
<dbReference type="Pfam" id="PF18829">
    <property type="entry name" value="Importin_rep_6"/>
    <property type="match status" value="1"/>
</dbReference>
<dbReference type="SUPFAM" id="SSF48371">
    <property type="entry name" value="ARM repeat"/>
    <property type="match status" value="2"/>
</dbReference>
<name>RNBP6_MOUSE</name>
<accession>Q8BIV3</accession>
<accession>Q3TTJ6</accession>
<protein>
    <recommendedName>
        <fullName>Ran-binding protein 6</fullName>
        <shortName>RanBP6</shortName>
    </recommendedName>
</protein>
<proteinExistence type="evidence at protein level"/>
<organism>
    <name type="scientific">Mus musculus</name>
    <name type="common">Mouse</name>
    <dbReference type="NCBI Taxonomy" id="10090"/>
    <lineage>
        <taxon>Eukaryota</taxon>
        <taxon>Metazoa</taxon>
        <taxon>Chordata</taxon>
        <taxon>Craniata</taxon>
        <taxon>Vertebrata</taxon>
        <taxon>Euteleostomi</taxon>
        <taxon>Mammalia</taxon>
        <taxon>Eutheria</taxon>
        <taxon>Euarchontoglires</taxon>
        <taxon>Glires</taxon>
        <taxon>Rodentia</taxon>
        <taxon>Myomorpha</taxon>
        <taxon>Muroidea</taxon>
        <taxon>Muridae</taxon>
        <taxon>Murinae</taxon>
        <taxon>Mus</taxon>
        <taxon>Mus</taxon>
    </lineage>
</organism>
<feature type="initiator methionine" description="Removed" evidence="2">
    <location>
        <position position="1"/>
    </location>
</feature>
<feature type="chain" id="PRO_0000120780" description="Ran-binding protein 6">
    <location>
        <begin position="2"/>
        <end position="1105"/>
    </location>
</feature>
<feature type="repeat" description="HEAT 1">
    <location>
        <begin position="219"/>
        <end position="257"/>
    </location>
</feature>
<feature type="repeat" description="HEAT 2">
    <location>
        <begin position="361"/>
        <end position="399"/>
    </location>
</feature>
<feature type="repeat" description="HEAT 3">
    <location>
        <begin position="402"/>
        <end position="440"/>
    </location>
</feature>
<feature type="repeat" description="HEAT 4">
    <location>
        <begin position="444"/>
        <end position="483"/>
    </location>
</feature>
<feature type="repeat" description="HEAT 5">
    <location>
        <begin position="866"/>
        <end position="905"/>
    </location>
</feature>
<feature type="repeat" description="HEAT 6">
    <location>
        <begin position="908"/>
        <end position="946"/>
    </location>
</feature>
<feature type="repeat" description="HEAT 7">
    <location>
        <begin position="949"/>
        <end position="987"/>
    </location>
</feature>
<feature type="modified residue" description="N-acetylalanine" evidence="2">
    <location>
        <position position="2"/>
    </location>
</feature>
<feature type="sequence conflict" description="In Ref. 2; BAE36329." evidence="3" ref="2">
    <original>A</original>
    <variation>CLKQFNTIYHKSSYNVS</variation>
    <location>
        <position position="1105"/>
    </location>
</feature>
<sequence length="1105" mass="124587">MAAAGSAGLPATVSEKQEFYQLLKNLINPSCMVRRQAEEVYENIPGLCKTTFLLDAVRNRRAGYEVRQMAAALLRRLLSSGFEEVYPNLPPEVQRDVKIELILAVKLETHASMRKKLCDIFAVLARNLIDESGTNHWPEGLKFLIDSIHSKNVVLWEVALHVFWHFPGIFGNQDRHDLDIIKRLLDQCIQDQEHPAIRTLSARAAATFVLANENNIALFKDFADLLPGILQAVNDSCYQDDDSVLESLVEIADTVPKYLGPYLEDTLQLSLKLCGDSRLSNLQRQLALEVIVTLSETATPMLKKHTNIIAQAVPHILAMMVDLQDDDDWVNADEMEEDDFDSNAVAAESALDRLACGLGGKVVLPMTKEHIMQMLQSPDWKCRHAGLMALSAIGEGCHQQMEPILDETVNSVLLFLQDPHPRVRAAACTTLGQMATDFAPSFQKKFHEIVITALLRTMENQGNQRVQSHAASALVIFIEDCPKSLLILYLENMVKSLHSILVIKLQELIRNGTKLALEQLVTTIASVADAIEESFIPYYDIFMPSLKHVVELAVQKELKLLRGKTIECISHVGLAVGKEKFMQDASNVMQLLLKTQSDLNNMEDDDPQTSYMVSAWARMCKILGKDFEQYLPLVIEPLIKTASAKPDVALLDTQDVENMSDDDGWQFVNLGDQQSFGIKTSGLEAKATACQMLVYYAKELREGFVEYTEQVVKMMVPLLKFYFHDNVRVAAAEAMPFLLECARIRGSEYLSQMWQFICDPLIKAIGTEPDTDVLSEIMNSFAKSIEVMGDGCLNDEHLEELGGILKAKLEGHFKNQELRQVKRQEENYDQQVEMSLQDEDECDVYILTKVSDILHSLFSTYKEKILPWFEQLLPLIVNLICSSRPWPDRQWGLCIFDDIIEHCSPTSFKYVEYFRWPMLLNMRDNNPEVRQAAAYGLGVMAQFGGDDYRSLCSEAVPLLVKVIKCANSKTKKNVIATENCISAIGKILKFKPNCVNVDEVLPHWLSWLPLHEDKEEAIQTLNFLCDLIESNHPVVIGPNNSNLPKIISIIAEGKINETISHEDPCAKRLANVVRQIQTSEELWLECTSQLDDEQQEALHELLSFA</sequence>
<gene>
    <name type="primary">Ranbp6</name>
</gene>
<evidence type="ECO:0000250" key="1"/>
<evidence type="ECO:0000250" key="2">
    <source>
        <dbReference type="UniProtKB" id="O60518"/>
    </source>
</evidence>
<evidence type="ECO:0000305" key="3"/>
<comment type="function">
    <text>May function in nuclear protein import as nuclear transport receptor.</text>
</comment>
<comment type="subcellular location">
    <subcellularLocation>
        <location evidence="1">Cytoplasm</location>
    </subcellularLocation>
    <subcellularLocation>
        <location evidence="1">Nucleus</location>
    </subcellularLocation>
</comment>
<comment type="similarity">
    <text evidence="3">Belongs to the importin beta family.</text>
</comment>
<comment type="sequence caution" evidence="3">
    <conflict type="erroneous initiation">
        <sequence resource="EMBL-CDS" id="BAC38756"/>
    </conflict>
</comment>
<comment type="sequence caution" evidence="3">
    <conflict type="erroneous initiation">
        <sequence resource="EMBL-CDS" id="BAE36329"/>
    </conflict>
</comment>
<keyword id="KW-0007">Acetylation</keyword>
<keyword id="KW-0963">Cytoplasm</keyword>
<keyword id="KW-0539">Nucleus</keyword>
<keyword id="KW-0653">Protein transport</keyword>
<keyword id="KW-1185">Reference proteome</keyword>
<keyword id="KW-0677">Repeat</keyword>
<keyword id="KW-0813">Transport</keyword>
<reference key="1">
    <citation type="journal article" date="2009" name="PLoS Biol.">
        <title>Lineage-specific biology revealed by a finished genome assembly of the mouse.</title>
        <authorList>
            <person name="Church D.M."/>
            <person name="Goodstadt L."/>
            <person name="Hillier L.W."/>
            <person name="Zody M.C."/>
            <person name="Goldstein S."/>
            <person name="She X."/>
            <person name="Bult C.J."/>
            <person name="Agarwala R."/>
            <person name="Cherry J.L."/>
            <person name="DiCuccio M."/>
            <person name="Hlavina W."/>
            <person name="Kapustin Y."/>
            <person name="Meric P."/>
            <person name="Maglott D."/>
            <person name="Birtle Z."/>
            <person name="Marques A.C."/>
            <person name="Graves T."/>
            <person name="Zhou S."/>
            <person name="Teague B."/>
            <person name="Potamousis K."/>
            <person name="Churas C."/>
            <person name="Place M."/>
            <person name="Herschleb J."/>
            <person name="Runnheim R."/>
            <person name="Forrest D."/>
            <person name="Amos-Landgraf J."/>
            <person name="Schwartz D.C."/>
            <person name="Cheng Z."/>
            <person name="Lindblad-Toh K."/>
            <person name="Eichler E.E."/>
            <person name="Ponting C.P."/>
        </authorList>
    </citation>
    <scope>NUCLEOTIDE SEQUENCE [LARGE SCALE GENOMIC DNA]</scope>
    <source>
        <strain>C57BL/6J</strain>
    </source>
</reference>
<reference key="2">
    <citation type="journal article" date="2005" name="Science">
        <title>The transcriptional landscape of the mammalian genome.</title>
        <authorList>
            <person name="Carninci P."/>
            <person name="Kasukawa T."/>
            <person name="Katayama S."/>
            <person name="Gough J."/>
            <person name="Frith M.C."/>
            <person name="Maeda N."/>
            <person name="Oyama R."/>
            <person name="Ravasi T."/>
            <person name="Lenhard B."/>
            <person name="Wells C."/>
            <person name="Kodzius R."/>
            <person name="Shimokawa K."/>
            <person name="Bajic V.B."/>
            <person name="Brenner S.E."/>
            <person name="Batalov S."/>
            <person name="Forrest A.R."/>
            <person name="Zavolan M."/>
            <person name="Davis M.J."/>
            <person name="Wilming L.G."/>
            <person name="Aidinis V."/>
            <person name="Allen J.E."/>
            <person name="Ambesi-Impiombato A."/>
            <person name="Apweiler R."/>
            <person name="Aturaliya R.N."/>
            <person name="Bailey T.L."/>
            <person name="Bansal M."/>
            <person name="Baxter L."/>
            <person name="Beisel K.W."/>
            <person name="Bersano T."/>
            <person name="Bono H."/>
            <person name="Chalk A.M."/>
            <person name="Chiu K.P."/>
            <person name="Choudhary V."/>
            <person name="Christoffels A."/>
            <person name="Clutterbuck D.R."/>
            <person name="Crowe M.L."/>
            <person name="Dalla E."/>
            <person name="Dalrymple B.P."/>
            <person name="de Bono B."/>
            <person name="Della Gatta G."/>
            <person name="di Bernardo D."/>
            <person name="Down T."/>
            <person name="Engstrom P."/>
            <person name="Fagiolini M."/>
            <person name="Faulkner G."/>
            <person name="Fletcher C.F."/>
            <person name="Fukushima T."/>
            <person name="Furuno M."/>
            <person name="Futaki S."/>
            <person name="Gariboldi M."/>
            <person name="Georgii-Hemming P."/>
            <person name="Gingeras T.R."/>
            <person name="Gojobori T."/>
            <person name="Green R.E."/>
            <person name="Gustincich S."/>
            <person name="Harbers M."/>
            <person name="Hayashi Y."/>
            <person name="Hensch T.K."/>
            <person name="Hirokawa N."/>
            <person name="Hill D."/>
            <person name="Huminiecki L."/>
            <person name="Iacono M."/>
            <person name="Ikeo K."/>
            <person name="Iwama A."/>
            <person name="Ishikawa T."/>
            <person name="Jakt M."/>
            <person name="Kanapin A."/>
            <person name="Katoh M."/>
            <person name="Kawasawa Y."/>
            <person name="Kelso J."/>
            <person name="Kitamura H."/>
            <person name="Kitano H."/>
            <person name="Kollias G."/>
            <person name="Krishnan S.P."/>
            <person name="Kruger A."/>
            <person name="Kummerfeld S.K."/>
            <person name="Kurochkin I.V."/>
            <person name="Lareau L.F."/>
            <person name="Lazarevic D."/>
            <person name="Lipovich L."/>
            <person name="Liu J."/>
            <person name="Liuni S."/>
            <person name="McWilliam S."/>
            <person name="Madan Babu M."/>
            <person name="Madera M."/>
            <person name="Marchionni L."/>
            <person name="Matsuda H."/>
            <person name="Matsuzawa S."/>
            <person name="Miki H."/>
            <person name="Mignone F."/>
            <person name="Miyake S."/>
            <person name="Morris K."/>
            <person name="Mottagui-Tabar S."/>
            <person name="Mulder N."/>
            <person name="Nakano N."/>
            <person name="Nakauchi H."/>
            <person name="Ng P."/>
            <person name="Nilsson R."/>
            <person name="Nishiguchi S."/>
            <person name="Nishikawa S."/>
            <person name="Nori F."/>
            <person name="Ohara O."/>
            <person name="Okazaki Y."/>
            <person name="Orlando V."/>
            <person name="Pang K.C."/>
            <person name="Pavan W.J."/>
            <person name="Pavesi G."/>
            <person name="Pesole G."/>
            <person name="Petrovsky N."/>
            <person name="Piazza S."/>
            <person name="Reed J."/>
            <person name="Reid J.F."/>
            <person name="Ring B.Z."/>
            <person name="Ringwald M."/>
            <person name="Rost B."/>
            <person name="Ruan Y."/>
            <person name="Salzberg S.L."/>
            <person name="Sandelin A."/>
            <person name="Schneider C."/>
            <person name="Schoenbach C."/>
            <person name="Sekiguchi K."/>
            <person name="Semple C.A."/>
            <person name="Seno S."/>
            <person name="Sessa L."/>
            <person name="Sheng Y."/>
            <person name="Shibata Y."/>
            <person name="Shimada H."/>
            <person name="Shimada K."/>
            <person name="Silva D."/>
            <person name="Sinclair B."/>
            <person name="Sperling S."/>
            <person name="Stupka E."/>
            <person name="Sugiura K."/>
            <person name="Sultana R."/>
            <person name="Takenaka Y."/>
            <person name="Taki K."/>
            <person name="Tammoja K."/>
            <person name="Tan S.L."/>
            <person name="Tang S."/>
            <person name="Taylor M.S."/>
            <person name="Tegner J."/>
            <person name="Teichmann S.A."/>
            <person name="Ueda H.R."/>
            <person name="van Nimwegen E."/>
            <person name="Verardo R."/>
            <person name="Wei C.L."/>
            <person name="Yagi K."/>
            <person name="Yamanishi H."/>
            <person name="Zabarovsky E."/>
            <person name="Zhu S."/>
            <person name="Zimmer A."/>
            <person name="Hide W."/>
            <person name="Bult C."/>
            <person name="Grimmond S.M."/>
            <person name="Teasdale R.D."/>
            <person name="Liu E.T."/>
            <person name="Brusic V."/>
            <person name="Quackenbush J."/>
            <person name="Wahlestedt C."/>
            <person name="Mattick J.S."/>
            <person name="Hume D.A."/>
            <person name="Kai C."/>
            <person name="Sasaki D."/>
            <person name="Tomaru Y."/>
            <person name="Fukuda S."/>
            <person name="Kanamori-Katayama M."/>
            <person name="Suzuki M."/>
            <person name="Aoki J."/>
            <person name="Arakawa T."/>
            <person name="Iida J."/>
            <person name="Imamura K."/>
            <person name="Itoh M."/>
            <person name="Kato T."/>
            <person name="Kawaji H."/>
            <person name="Kawagashira N."/>
            <person name="Kawashima T."/>
            <person name="Kojima M."/>
            <person name="Kondo S."/>
            <person name="Konno H."/>
            <person name="Nakano K."/>
            <person name="Ninomiya N."/>
            <person name="Nishio T."/>
            <person name="Okada M."/>
            <person name="Plessy C."/>
            <person name="Shibata K."/>
            <person name="Shiraki T."/>
            <person name="Suzuki S."/>
            <person name="Tagami M."/>
            <person name="Waki K."/>
            <person name="Watahiki A."/>
            <person name="Okamura-Oho Y."/>
            <person name="Suzuki H."/>
            <person name="Kawai J."/>
            <person name="Hayashizaki Y."/>
        </authorList>
    </citation>
    <scope>NUCLEOTIDE SEQUENCE [LARGE SCALE MRNA] OF 667-1105</scope>
    <source>
        <strain>C57BL/6J</strain>
        <tissue>Hippocampus</tissue>
        <tissue>Testis</tissue>
    </source>
</reference>
<reference key="3">
    <citation type="journal article" date="2010" name="Cell">
        <title>A tissue-specific atlas of mouse protein phosphorylation and expression.</title>
        <authorList>
            <person name="Huttlin E.L."/>
            <person name="Jedrychowski M.P."/>
            <person name="Elias J.E."/>
            <person name="Goswami T."/>
            <person name="Rad R."/>
            <person name="Beausoleil S.A."/>
            <person name="Villen J."/>
            <person name="Haas W."/>
            <person name="Sowa M.E."/>
            <person name="Gygi S.P."/>
        </authorList>
    </citation>
    <scope>IDENTIFICATION BY MASS SPECTROMETRY [LARGE SCALE ANALYSIS]</scope>
    <source>
        <tissue>Brain</tissue>
    </source>
</reference>